<gene>
    <name type="primary">apa</name>
</gene>
<organism>
    <name type="scientific">Mycobacterium avium</name>
    <dbReference type="NCBI Taxonomy" id="1764"/>
    <lineage>
        <taxon>Bacteria</taxon>
        <taxon>Bacillati</taxon>
        <taxon>Actinomycetota</taxon>
        <taxon>Actinomycetes</taxon>
        <taxon>Mycobacteriales</taxon>
        <taxon>Mycobacteriaceae</taxon>
        <taxon>Mycobacterium</taxon>
        <taxon>Mycobacterium avium complex (MAC)</taxon>
    </lineage>
</organism>
<protein>
    <recommendedName>
        <fullName>Alanine and proline-rich secreted protein Apa</fullName>
    </recommendedName>
    <alternativeName>
        <fullName>45/47 kDa antigen</fullName>
    </alternativeName>
    <alternativeName>
        <fullName>FAP-A</fullName>
    </alternativeName>
    <alternativeName>
        <fullName>Fibronectin attachment protein</fullName>
    </alternativeName>
</protein>
<name>APA_MYCAV</name>
<comment type="subcellular location">
    <subcellularLocation>
        <location>Secreted</location>
    </subcellularLocation>
</comment>
<comment type="similarity">
    <text evidence="3">Belongs to the Apa family.</text>
</comment>
<dbReference type="EMBL" id="U53585">
    <property type="protein sequence ID" value="AAB50543.1"/>
    <property type="molecule type" value="Genomic_DNA"/>
</dbReference>
<dbReference type="SMR" id="Q48919"/>
<dbReference type="GO" id="GO:0005576">
    <property type="term" value="C:extracellular region"/>
    <property type="evidence" value="ECO:0007669"/>
    <property type="project" value="UniProtKB-SubCell"/>
</dbReference>
<dbReference type="GO" id="GO:0050840">
    <property type="term" value="F:extracellular matrix binding"/>
    <property type="evidence" value="ECO:0007669"/>
    <property type="project" value="InterPro"/>
</dbReference>
<dbReference type="InterPro" id="IPR010801">
    <property type="entry name" value="FAP"/>
</dbReference>
<dbReference type="Pfam" id="PF07174">
    <property type="entry name" value="FAP"/>
    <property type="match status" value="1"/>
</dbReference>
<sequence length="381" mass="38211">MDQVEATSTRRKGLWTTLAITTVSGASAVVIALPETSHADPEVPTPVPPSTATTPHPRRRRIPGQPADNAQAGAPAPAPNGQQRPPRRRRMIPTRAPPPAGAPPNGAPPAAPNGAPPPPVDPNAPPPPPADPNAGRIPNSYVLPAGWVESDASHLDYGSALLSKVTGPPPMPDQPPPVANDTRIVMGRVDQKLYASAEANNAKAAVGLGSDMGEFFMPYPGTRINQDSTPLNGANGSTGSASYYEVKFSDASKPNGQIWTGVIGSANAGNRQRWFVVWLGTSNDPVDKVAAKALAESIQAWTPPPAPPAAPGGPGAPAPGAPGAPAPGAPAAPGVTAPAAPAPAAPGAPAAPGAPAPEPGQAPAVEVSPTPTPTPQQTLSA</sequence>
<reference key="1">
    <citation type="journal article" date="1996" name="Mol. Microbiol.">
        <title>Characterization of the fibronectin-attachment protein of Mycobacterium avium reveals a fibronectin-binding motif conserved among mycobacteria.</title>
        <authorList>
            <person name="Schorey J.S."/>
            <person name="Holsti M.A."/>
            <person name="Ratliff T.L."/>
            <person name="Allen P.M."/>
            <person name="Brown E.J."/>
        </authorList>
    </citation>
    <scope>NUCLEOTIDE SEQUENCE [GENOMIC DNA]</scope>
    <source>
        <strain>101</strain>
    </source>
</reference>
<feature type="signal peptide" evidence="1">
    <location>
        <begin position="1"/>
        <end position="32"/>
    </location>
</feature>
<feature type="chain" id="PRO_0000020742" description="Alanine and proline-rich secreted protein Apa">
    <location>
        <begin position="33"/>
        <end position="381"/>
    </location>
</feature>
<feature type="region of interest" description="Disordered" evidence="2">
    <location>
        <begin position="35"/>
        <end position="137"/>
    </location>
</feature>
<feature type="region of interest" description="Disordered" evidence="2">
    <location>
        <begin position="300"/>
        <end position="381"/>
    </location>
</feature>
<feature type="compositionally biased region" description="Low complexity" evidence="2">
    <location>
        <begin position="63"/>
        <end position="84"/>
    </location>
</feature>
<feature type="compositionally biased region" description="Pro residues" evidence="2">
    <location>
        <begin position="95"/>
        <end position="131"/>
    </location>
</feature>
<feature type="compositionally biased region" description="Pro residues" evidence="2">
    <location>
        <begin position="302"/>
        <end position="330"/>
    </location>
</feature>
<evidence type="ECO:0000255" key="1"/>
<evidence type="ECO:0000256" key="2">
    <source>
        <dbReference type="SAM" id="MobiDB-lite"/>
    </source>
</evidence>
<evidence type="ECO:0000305" key="3"/>
<keyword id="KW-0964">Secreted</keyword>
<keyword id="KW-0732">Signal</keyword>
<proteinExistence type="inferred from homology"/>
<accession>Q48919</accession>